<gene>
    <name evidence="1" type="primary">thrB</name>
    <name type="ordered locus">BcerKBAB4_1835</name>
</gene>
<keyword id="KW-0028">Amino-acid biosynthesis</keyword>
<keyword id="KW-0067">ATP-binding</keyword>
<keyword id="KW-0963">Cytoplasm</keyword>
<keyword id="KW-0418">Kinase</keyword>
<keyword id="KW-0547">Nucleotide-binding</keyword>
<keyword id="KW-0791">Threonine biosynthesis</keyword>
<keyword id="KW-0808">Transferase</keyword>
<organism>
    <name type="scientific">Bacillus mycoides (strain KBAB4)</name>
    <name type="common">Bacillus weihenstephanensis</name>
    <dbReference type="NCBI Taxonomy" id="315730"/>
    <lineage>
        <taxon>Bacteria</taxon>
        <taxon>Bacillati</taxon>
        <taxon>Bacillota</taxon>
        <taxon>Bacilli</taxon>
        <taxon>Bacillales</taxon>
        <taxon>Bacillaceae</taxon>
        <taxon>Bacillus</taxon>
        <taxon>Bacillus cereus group</taxon>
    </lineage>
</organism>
<comment type="function">
    <text evidence="1">Catalyzes the ATP-dependent phosphorylation of L-homoserine to L-homoserine phosphate.</text>
</comment>
<comment type="catalytic activity">
    <reaction evidence="1">
        <text>L-homoserine + ATP = O-phospho-L-homoserine + ADP + H(+)</text>
        <dbReference type="Rhea" id="RHEA:13985"/>
        <dbReference type="ChEBI" id="CHEBI:15378"/>
        <dbReference type="ChEBI" id="CHEBI:30616"/>
        <dbReference type="ChEBI" id="CHEBI:57476"/>
        <dbReference type="ChEBI" id="CHEBI:57590"/>
        <dbReference type="ChEBI" id="CHEBI:456216"/>
        <dbReference type="EC" id="2.7.1.39"/>
    </reaction>
</comment>
<comment type="pathway">
    <text evidence="1">Amino-acid biosynthesis; L-threonine biosynthesis; L-threonine from L-aspartate: step 4/5.</text>
</comment>
<comment type="subcellular location">
    <subcellularLocation>
        <location evidence="1">Cytoplasm</location>
    </subcellularLocation>
</comment>
<comment type="similarity">
    <text evidence="1">Belongs to the GHMP kinase family. Homoserine kinase subfamily.</text>
</comment>
<evidence type="ECO:0000255" key="1">
    <source>
        <dbReference type="HAMAP-Rule" id="MF_00384"/>
    </source>
</evidence>
<accession>A9VQT3</accession>
<name>KHSE_BACMK</name>
<sequence length="297" mass="32150">MIPLRVRVPASTANVGPGFDSVGIALSLYLEVSVKEEADKWQVIHSFDDSIPKDDKNLIVSTACKVCPSLSPHIIEVTSNIPLTRGLGSSASAIVAGIELANQLGNLYLTTDQKVQIATNFEGHPDNVAASILGGTVIGALDGKNVSVVRIESKELGVISLIPNEELNTDESRSVLPEMFPFHEAVKASAISNVLVAALCQKKWEVVGEMMERDHFHEPYRLELVPLLPSIRKCAKEFGAYGTALSGAGPSIFILTPYEKRKEIADQLARVFAAMKVCELEIDHKGITVNKEEHIGL</sequence>
<proteinExistence type="inferred from homology"/>
<dbReference type="EC" id="2.7.1.39" evidence="1"/>
<dbReference type="EMBL" id="CP000903">
    <property type="protein sequence ID" value="ABY43068.1"/>
    <property type="molecule type" value="Genomic_DNA"/>
</dbReference>
<dbReference type="RefSeq" id="WP_002189304.1">
    <property type="nucleotide sequence ID" value="NC_010184.1"/>
</dbReference>
<dbReference type="SMR" id="A9VQT3"/>
<dbReference type="KEGG" id="bwe:BcerKBAB4_1835"/>
<dbReference type="eggNOG" id="COG0083">
    <property type="taxonomic scope" value="Bacteria"/>
</dbReference>
<dbReference type="HOGENOM" id="CLU_041243_0_0_9"/>
<dbReference type="UniPathway" id="UPA00050">
    <property type="reaction ID" value="UER00064"/>
</dbReference>
<dbReference type="Proteomes" id="UP000002154">
    <property type="component" value="Chromosome"/>
</dbReference>
<dbReference type="GO" id="GO:0005737">
    <property type="term" value="C:cytoplasm"/>
    <property type="evidence" value="ECO:0007669"/>
    <property type="project" value="UniProtKB-SubCell"/>
</dbReference>
<dbReference type="GO" id="GO:0005524">
    <property type="term" value="F:ATP binding"/>
    <property type="evidence" value="ECO:0007669"/>
    <property type="project" value="UniProtKB-UniRule"/>
</dbReference>
<dbReference type="GO" id="GO:0004413">
    <property type="term" value="F:homoserine kinase activity"/>
    <property type="evidence" value="ECO:0007669"/>
    <property type="project" value="UniProtKB-UniRule"/>
</dbReference>
<dbReference type="GO" id="GO:0009088">
    <property type="term" value="P:threonine biosynthetic process"/>
    <property type="evidence" value="ECO:0007669"/>
    <property type="project" value="UniProtKB-UniRule"/>
</dbReference>
<dbReference type="Gene3D" id="3.30.230.10">
    <property type="match status" value="1"/>
</dbReference>
<dbReference type="Gene3D" id="3.30.70.890">
    <property type="entry name" value="GHMP kinase, C-terminal domain"/>
    <property type="match status" value="1"/>
</dbReference>
<dbReference type="HAMAP" id="MF_00384">
    <property type="entry name" value="Homoser_kinase"/>
    <property type="match status" value="1"/>
</dbReference>
<dbReference type="InterPro" id="IPR013750">
    <property type="entry name" value="GHMP_kinase_C_dom"/>
</dbReference>
<dbReference type="InterPro" id="IPR036554">
    <property type="entry name" value="GHMP_kinase_C_sf"/>
</dbReference>
<dbReference type="InterPro" id="IPR006204">
    <property type="entry name" value="GHMP_kinase_N_dom"/>
</dbReference>
<dbReference type="InterPro" id="IPR006203">
    <property type="entry name" value="GHMP_knse_ATP-bd_CS"/>
</dbReference>
<dbReference type="InterPro" id="IPR000870">
    <property type="entry name" value="Homoserine_kinase"/>
</dbReference>
<dbReference type="InterPro" id="IPR020568">
    <property type="entry name" value="Ribosomal_Su5_D2-typ_SF"/>
</dbReference>
<dbReference type="InterPro" id="IPR014721">
    <property type="entry name" value="Ribsml_uS5_D2-typ_fold_subgr"/>
</dbReference>
<dbReference type="NCBIfam" id="TIGR00191">
    <property type="entry name" value="thrB"/>
    <property type="match status" value="1"/>
</dbReference>
<dbReference type="PANTHER" id="PTHR20861:SF1">
    <property type="entry name" value="HOMOSERINE KINASE"/>
    <property type="match status" value="1"/>
</dbReference>
<dbReference type="PANTHER" id="PTHR20861">
    <property type="entry name" value="HOMOSERINE/4-DIPHOSPHOCYTIDYL-2-C-METHYL-D-ERYTHRITOL KINASE"/>
    <property type="match status" value="1"/>
</dbReference>
<dbReference type="Pfam" id="PF08544">
    <property type="entry name" value="GHMP_kinases_C"/>
    <property type="match status" value="1"/>
</dbReference>
<dbReference type="Pfam" id="PF00288">
    <property type="entry name" value="GHMP_kinases_N"/>
    <property type="match status" value="1"/>
</dbReference>
<dbReference type="PIRSF" id="PIRSF000676">
    <property type="entry name" value="Homoser_kin"/>
    <property type="match status" value="1"/>
</dbReference>
<dbReference type="PRINTS" id="PR00958">
    <property type="entry name" value="HOMSERKINASE"/>
</dbReference>
<dbReference type="SUPFAM" id="SSF55060">
    <property type="entry name" value="GHMP Kinase, C-terminal domain"/>
    <property type="match status" value="1"/>
</dbReference>
<dbReference type="SUPFAM" id="SSF54211">
    <property type="entry name" value="Ribosomal protein S5 domain 2-like"/>
    <property type="match status" value="1"/>
</dbReference>
<dbReference type="PROSITE" id="PS00627">
    <property type="entry name" value="GHMP_KINASES_ATP"/>
    <property type="match status" value="1"/>
</dbReference>
<feature type="chain" id="PRO_1000122407" description="Homoserine kinase">
    <location>
        <begin position="1"/>
        <end position="297"/>
    </location>
</feature>
<feature type="binding site" evidence="1">
    <location>
        <begin position="82"/>
        <end position="92"/>
    </location>
    <ligand>
        <name>ATP</name>
        <dbReference type="ChEBI" id="CHEBI:30616"/>
    </ligand>
</feature>
<reference key="1">
    <citation type="journal article" date="2008" name="Chem. Biol. Interact.">
        <title>Extending the Bacillus cereus group genomics to putative food-borne pathogens of different toxicity.</title>
        <authorList>
            <person name="Lapidus A."/>
            <person name="Goltsman E."/>
            <person name="Auger S."/>
            <person name="Galleron N."/>
            <person name="Segurens B."/>
            <person name="Dossat C."/>
            <person name="Land M.L."/>
            <person name="Broussolle V."/>
            <person name="Brillard J."/>
            <person name="Guinebretiere M.-H."/>
            <person name="Sanchis V."/>
            <person name="Nguen-the C."/>
            <person name="Lereclus D."/>
            <person name="Richardson P."/>
            <person name="Wincker P."/>
            <person name="Weissenbach J."/>
            <person name="Ehrlich S.D."/>
            <person name="Sorokin A."/>
        </authorList>
    </citation>
    <scope>NUCLEOTIDE SEQUENCE [LARGE SCALE GENOMIC DNA]</scope>
    <source>
        <strain>KBAB4</strain>
    </source>
</reference>
<protein>
    <recommendedName>
        <fullName evidence="1">Homoserine kinase</fullName>
        <shortName evidence="1">HK</shortName>
        <shortName evidence="1">HSK</shortName>
        <ecNumber evidence="1">2.7.1.39</ecNumber>
    </recommendedName>
</protein>